<protein>
    <recommendedName>
        <fullName evidence="6">AFP homolog 2</fullName>
    </recommendedName>
    <alternativeName>
        <fullName evidence="7">Novel interactor of JAZ</fullName>
    </alternativeName>
</protein>
<organism>
    <name type="scientific">Arabidopsis thaliana</name>
    <name type="common">Mouse-ear cress</name>
    <dbReference type="NCBI Taxonomy" id="3702"/>
    <lineage>
        <taxon>Eukaryota</taxon>
        <taxon>Viridiplantae</taxon>
        <taxon>Streptophyta</taxon>
        <taxon>Embryophyta</taxon>
        <taxon>Tracheophyta</taxon>
        <taxon>Spermatophyta</taxon>
        <taxon>Magnoliopsida</taxon>
        <taxon>eudicotyledons</taxon>
        <taxon>Gunneridae</taxon>
        <taxon>Pentapetalae</taxon>
        <taxon>rosids</taxon>
        <taxon>malvids</taxon>
        <taxon>Brassicales</taxon>
        <taxon>Brassicaceae</taxon>
        <taxon>Camelineae</taxon>
        <taxon>Arabidopsis</taxon>
    </lineage>
</organism>
<proteinExistence type="evidence at protein level"/>
<name>NINJA_ARATH</name>
<dbReference type="EMBL" id="AL078469">
    <property type="protein sequence ID" value="CAB43905.1"/>
    <property type="molecule type" value="Genomic_DNA"/>
</dbReference>
<dbReference type="EMBL" id="AL161573">
    <property type="protein sequence ID" value="CAB81479.1"/>
    <property type="molecule type" value="Genomic_DNA"/>
</dbReference>
<dbReference type="EMBL" id="CP002687">
    <property type="protein sequence ID" value="AEE85560.1"/>
    <property type="molecule type" value="Genomic_DNA"/>
</dbReference>
<dbReference type="EMBL" id="CP002687">
    <property type="protein sequence ID" value="AEE85561.1"/>
    <property type="molecule type" value="Genomic_DNA"/>
</dbReference>
<dbReference type="EMBL" id="CP002687">
    <property type="protein sequence ID" value="AEE85562.1"/>
    <property type="molecule type" value="Genomic_DNA"/>
</dbReference>
<dbReference type="EMBL" id="AY054672">
    <property type="protein sequence ID" value="AAK96863.1"/>
    <property type="molecule type" value="mRNA"/>
</dbReference>
<dbReference type="EMBL" id="AY065350">
    <property type="protein sequence ID" value="AAL38791.1"/>
    <property type="molecule type" value="mRNA"/>
</dbReference>
<dbReference type="EMBL" id="AY096726">
    <property type="protein sequence ID" value="AAM20360.1"/>
    <property type="molecule type" value="mRNA"/>
</dbReference>
<dbReference type="EMBL" id="AK316690">
    <property type="protein sequence ID" value="BAH19417.1"/>
    <property type="molecule type" value="mRNA"/>
</dbReference>
<dbReference type="EMBL" id="AY085087">
    <property type="protein sequence ID" value="AAM61641.1"/>
    <property type="molecule type" value="mRNA"/>
</dbReference>
<dbReference type="PIR" id="T08946">
    <property type="entry name" value="T08946"/>
</dbReference>
<dbReference type="RefSeq" id="NP_001078466.1">
    <property type="nucleotide sequence ID" value="NM_001084997.1"/>
</dbReference>
<dbReference type="RefSeq" id="NP_194620.1">
    <property type="nucleotide sequence ID" value="NM_119035.3"/>
</dbReference>
<dbReference type="RefSeq" id="NP_849467.1">
    <property type="nucleotide sequence ID" value="NM_179136.3"/>
</dbReference>
<dbReference type="PDB" id="5C6V">
    <property type="method" value="X-ray"/>
    <property type="resolution" value="3.10 A"/>
    <property type="chains" value="E/F/G/H=4-14"/>
</dbReference>
<dbReference type="PDB" id="8T2I">
    <property type="method" value="EM"/>
    <property type="resolution" value="10.40 A"/>
    <property type="chains" value="N=1-425"/>
</dbReference>
<dbReference type="PDBsum" id="5C6V"/>
<dbReference type="PDBsum" id="8T2I"/>
<dbReference type="EMDB" id="EMD-40983"/>
<dbReference type="SMR" id="Q9SV55"/>
<dbReference type="BioGRID" id="14299">
    <property type="interactions" value="79"/>
</dbReference>
<dbReference type="DIP" id="DIP-40581N"/>
<dbReference type="FunCoup" id="Q9SV55">
    <property type="interactions" value="2071"/>
</dbReference>
<dbReference type="IntAct" id="Q9SV55">
    <property type="interactions" value="21"/>
</dbReference>
<dbReference type="STRING" id="3702.Q9SV55"/>
<dbReference type="GlyGen" id="Q9SV55">
    <property type="glycosylation" value="1 site, 1 O-linked glycan (1 site)"/>
</dbReference>
<dbReference type="iPTMnet" id="Q9SV55"/>
<dbReference type="PaxDb" id="3702-AT4G28910.2"/>
<dbReference type="ProteomicsDB" id="249437"/>
<dbReference type="EnsemblPlants" id="AT4G28910.1">
    <property type="protein sequence ID" value="AT4G28910.1"/>
    <property type="gene ID" value="AT4G28910"/>
</dbReference>
<dbReference type="EnsemblPlants" id="AT4G28910.2">
    <property type="protein sequence ID" value="AT4G28910.2"/>
    <property type="gene ID" value="AT4G28910"/>
</dbReference>
<dbReference type="EnsemblPlants" id="AT4G28910.3">
    <property type="protein sequence ID" value="AT4G28910.3"/>
    <property type="gene ID" value="AT4G28910"/>
</dbReference>
<dbReference type="GeneID" id="829012"/>
<dbReference type="Gramene" id="AT4G28910.1">
    <property type="protein sequence ID" value="AT4G28910.1"/>
    <property type="gene ID" value="AT4G28910"/>
</dbReference>
<dbReference type="Gramene" id="AT4G28910.2">
    <property type="protein sequence ID" value="AT4G28910.2"/>
    <property type="gene ID" value="AT4G28910"/>
</dbReference>
<dbReference type="Gramene" id="AT4G28910.3">
    <property type="protein sequence ID" value="AT4G28910.3"/>
    <property type="gene ID" value="AT4G28910"/>
</dbReference>
<dbReference type="KEGG" id="ath:AT4G28910"/>
<dbReference type="Araport" id="AT4G28910"/>
<dbReference type="TAIR" id="AT4G28910">
    <property type="gene designation" value="NINJA"/>
</dbReference>
<dbReference type="eggNOG" id="ENOG502QSTR">
    <property type="taxonomic scope" value="Eukaryota"/>
</dbReference>
<dbReference type="HOGENOM" id="CLU_049096_0_0_1"/>
<dbReference type="InParanoid" id="Q9SV55"/>
<dbReference type="OMA" id="PVMFGYP"/>
<dbReference type="PhylomeDB" id="Q9SV55"/>
<dbReference type="EvolutionaryTrace" id="Q9SV55"/>
<dbReference type="PRO" id="PR:Q9SV55"/>
<dbReference type="Proteomes" id="UP000006548">
    <property type="component" value="Chromosome 4"/>
</dbReference>
<dbReference type="ExpressionAtlas" id="Q9SV55">
    <property type="expression patterns" value="baseline and differential"/>
</dbReference>
<dbReference type="GO" id="GO:0005634">
    <property type="term" value="C:nucleus"/>
    <property type="evidence" value="ECO:0000314"/>
    <property type="project" value="TAIR"/>
</dbReference>
<dbReference type="GO" id="GO:0006952">
    <property type="term" value="P:defense response"/>
    <property type="evidence" value="ECO:0007669"/>
    <property type="project" value="UniProtKB-KW"/>
</dbReference>
<dbReference type="GO" id="GO:0009867">
    <property type="term" value="P:jasmonic acid mediated signaling pathway"/>
    <property type="evidence" value="ECO:0000315"/>
    <property type="project" value="TAIR"/>
</dbReference>
<dbReference type="GO" id="GO:0045892">
    <property type="term" value="P:negative regulation of DNA-templated transcription"/>
    <property type="evidence" value="ECO:0000314"/>
    <property type="project" value="TAIR"/>
</dbReference>
<dbReference type="GO" id="GO:1901371">
    <property type="term" value="P:regulation of leaf morphogenesis"/>
    <property type="evidence" value="ECO:0000315"/>
    <property type="project" value="TAIR"/>
</dbReference>
<dbReference type="GO" id="GO:0009753">
    <property type="term" value="P:response to jasmonic acid"/>
    <property type="evidence" value="ECO:0000270"/>
    <property type="project" value="TAIR"/>
</dbReference>
<dbReference type="InterPro" id="IPR031307">
    <property type="entry name" value="Ninja_fam"/>
</dbReference>
<dbReference type="InterPro" id="IPR032308">
    <property type="entry name" value="TDBD"/>
</dbReference>
<dbReference type="PANTHER" id="PTHR31413">
    <property type="entry name" value="AFP HOMOLOG 2"/>
    <property type="match status" value="1"/>
</dbReference>
<dbReference type="PANTHER" id="PTHR31413:SF12">
    <property type="entry name" value="AFP HOMOLOG 2"/>
    <property type="match status" value="1"/>
</dbReference>
<dbReference type="Pfam" id="PF16135">
    <property type="entry name" value="TDBD"/>
    <property type="match status" value="1"/>
</dbReference>
<sequence>MDDDNGLELSLGLSCGGSTGKAKGNNNNNAGSSSENYRAEGGDRSAKVIDDFKNFLHPTSQRPAEPSSGSQRSDSGQQPPQNFFNDLSKAPTTEAEASTKPLWVEDESRKEAGNKRKFGFPGMNDDKKKEKDSSHVDMHEKKTKASHVSTATDEGSTAENEDVAESEVGGGSSSNHAKEVVRPPTDTNIVDNLTGQRRSNHGGSGTEEFTMRNMSYTVPFTVHPQNVVTSMPYSLPTKESGQHAAATSLLQPNANAGNLPIMFGYSPVQLPMLDKDGSGGIVALSQSPFAGRVPSNSATAKGEGKQPVAEEGSSEDASERPTGDNSNLNTAFSFDFSAIKPGMAADVKFGGSGARPNLPWVSTTGSGPHGRTISGVTYRYNANQIKIVCACHGSHMSPEEFVRHASEEYVSPESSMGMTAASAHT</sequence>
<accession>Q9SV55</accession>
<accession>Q940F7</accession>
<comment type="function">
    <text evidence="2 3 4">Acts as a transcriptional repressor. Negative regulator of jasmonate responses. Connects the JAZ proteins and the non-JAZ protein TIFY8 with the TOPLESS corepressors.</text>
</comment>
<comment type="subunit">
    <text evidence="2 4 5">Component of a complex at least composed of TOPLESS, TPR2, TPR3, TIFY4B/PPD2, MYC3/ATR2 and TIFY3B/JAZ12. Interacts (via C-terminus) with TIFY10A/JAZ1; TIFY10B/JAZ2; TIFY6B/JAZ3; TIFY6A/JAZ4; TIFY11A/JAZ5; TIFY11B/JAZ6; TIFY7/JAZ9; TIFY9/JAZ10; TIFY3A/JAZ11; TIFY3B/JAZ12; TIFY4A/PPD1; TIFY4B/PPD2 and TIFY8 (via TIFY domain). Interacts with TOPLESS (PubMed:20360743, PubMed:24416306). Interacts with PAT1H1 (PubMed:26956135).</text>
</comment>
<comment type="interaction">
    <interactant intactId="EBI-1787005">
        <id>Q9SV55</id>
    </interactant>
    <interactant intactId="EBI-963597">
        <id>Q9MAA7</id>
        <label>GID1A</label>
    </interactant>
    <organismsDiffer>false</organismsDiffer>
    <experiments>3</experiments>
</comment>
<comment type="interaction">
    <interactant intactId="EBI-1787005">
        <id>Q9SV55</id>
    </interactant>
    <interactant intactId="EBI-1388539">
        <id>Q9LMA8</id>
        <label>TIFY10A</label>
    </interactant>
    <organismsDiffer>false</organismsDiffer>
    <experiments>9</experiments>
</comment>
<comment type="interaction">
    <interactant intactId="EBI-1787005">
        <id>Q9SV55</id>
    </interactant>
    <interactant intactId="EBI-1792563">
        <id>Q9S7M2</id>
        <label>TIFY10B</label>
    </interactant>
    <organismsDiffer>false</organismsDiffer>
    <experiments>6</experiments>
</comment>
<comment type="interaction">
    <interactant intactId="EBI-1787005">
        <id>Q9SV55</id>
    </interactant>
    <interactant intactId="EBI-2312095">
        <id>Q9LDU5</id>
        <label>TIFY11A</label>
    </interactant>
    <organismsDiffer>false</organismsDiffer>
    <experiments>10</experiments>
</comment>
<comment type="interaction">
    <interactant intactId="EBI-1787005">
        <id>Q9SV55</id>
    </interactant>
    <interactant intactId="EBI-2312120">
        <id>Q9C9E3</id>
        <label>TIFY11B</label>
    </interactant>
    <organismsDiffer>false</organismsDiffer>
    <experiments>9</experiments>
</comment>
<comment type="interaction">
    <interactant intactId="EBI-1787005">
        <id>Q9SV55</id>
    </interactant>
    <interactant intactId="EBI-2312231">
        <id>Q9C5K8</id>
        <label>TIFY3B</label>
    </interactant>
    <organismsDiffer>false</organismsDiffer>
    <experiments>7</experiments>
</comment>
<comment type="interaction">
    <interactant intactId="EBI-1787005">
        <id>Q9SV55</id>
    </interactant>
    <interactant intactId="EBI-15206004">
        <id>Q8GY55</id>
        <label>TIFY4B</label>
    </interactant>
    <organismsDiffer>false</organismsDiffer>
    <experiments>7</experiments>
</comment>
<comment type="interaction">
    <interactant intactId="EBI-1787005">
        <id>Q9SV55</id>
    </interactant>
    <interactant intactId="EBI-2312053">
        <id>Q58G47</id>
        <label>TIFY6A</label>
    </interactant>
    <organismsDiffer>false</organismsDiffer>
    <experiments>2</experiments>
</comment>
<comment type="interaction">
    <interactant intactId="EBI-1787005">
        <id>Q9SV55</id>
    </interactant>
    <interactant intactId="EBI-1792431">
        <id>Q9LVI4</id>
        <label>TIFY6B</label>
    </interactant>
    <organismsDiffer>false</organismsDiffer>
    <experiments>3</experiments>
</comment>
<comment type="interaction">
    <interactant intactId="EBI-1787005">
        <id>Q9SV55</id>
    </interactant>
    <interactant intactId="EBI-1792583">
        <id>Q8W4J8</id>
        <label>TIFY7</label>
    </interactant>
    <organismsDiffer>false</organismsDiffer>
    <experiments>9</experiments>
</comment>
<comment type="interaction">
    <interactant intactId="EBI-1787005">
        <id>Q9SV55</id>
    </interactant>
    <interactant intactId="EBI-4426557">
        <id>Q84MB2</id>
        <label>TIFY8</label>
    </interactant>
    <organismsDiffer>false</organismsDiffer>
    <experiments>6</experiments>
</comment>
<comment type="interaction">
    <interactant intactId="EBI-1787005">
        <id>Q9SV55</id>
    </interactant>
    <interactant intactId="EBI-2312172">
        <id>Q93ZM9</id>
        <label>TIFY9</label>
    </interactant>
    <organismsDiffer>false</organismsDiffer>
    <experiments>7</experiments>
</comment>
<comment type="interaction">
    <interactant intactId="EBI-1787005">
        <id>Q9SV55</id>
    </interactant>
    <interactant intactId="EBI-2119299">
        <id>Q94AI7</id>
        <label>TPL</label>
    </interactant>
    <organismsDiffer>false</organismsDiffer>
    <experiments>4</experiments>
</comment>
<comment type="subcellular location">
    <subcellularLocation>
        <location evidence="2">Nucleus</location>
    </subcellularLocation>
</comment>
<comment type="induction">
    <text evidence="2">By jasmonate.</text>
</comment>
<comment type="miscellaneous">
    <text>Unlike the JAZ proteins, the stability of AFPH2/NINJA is unaffected by jasmonate.</text>
</comment>
<comment type="similarity">
    <text evidence="8">Belongs to the Ninja family.</text>
</comment>
<evidence type="ECO:0000256" key="1">
    <source>
        <dbReference type="SAM" id="MobiDB-lite"/>
    </source>
</evidence>
<evidence type="ECO:0000269" key="2">
    <source>
    </source>
</evidence>
<evidence type="ECO:0000269" key="3">
    <source>
    </source>
</evidence>
<evidence type="ECO:0000269" key="4">
    <source>
    </source>
</evidence>
<evidence type="ECO:0000269" key="5">
    <source>
    </source>
</evidence>
<evidence type="ECO:0000303" key="6">
    <source>
    </source>
</evidence>
<evidence type="ECO:0000303" key="7">
    <source>
    </source>
</evidence>
<evidence type="ECO:0000305" key="8"/>
<evidence type="ECO:0000312" key="9">
    <source>
        <dbReference type="Araport" id="AT4G28910"/>
    </source>
</evidence>
<evidence type="ECO:0000312" key="10">
    <source>
        <dbReference type="EMBL" id="CAB43905.1"/>
    </source>
</evidence>
<feature type="chain" id="PRO_0000369618" description="AFP homolog 2">
    <location>
        <begin position="1"/>
        <end position="425"/>
    </location>
</feature>
<feature type="region of interest" description="Disordered" evidence="1">
    <location>
        <begin position="1"/>
        <end position="207"/>
    </location>
</feature>
<feature type="region of interest" description="Necessary and sufficient for the interaction with TOPLESS">
    <location>
        <begin position="7"/>
        <end position="17"/>
    </location>
</feature>
<feature type="region of interest" description="Disordered" evidence="1">
    <location>
        <begin position="288"/>
        <end position="327"/>
    </location>
</feature>
<feature type="region of interest" description="Necessary and sufficient for the interaction with the JAZ proteins">
    <location>
        <begin position="322"/>
        <end position="425"/>
    </location>
</feature>
<feature type="compositionally biased region" description="Low complexity" evidence="1">
    <location>
        <begin position="20"/>
        <end position="34"/>
    </location>
</feature>
<feature type="compositionally biased region" description="Basic and acidic residues" evidence="1">
    <location>
        <begin position="37"/>
        <end position="54"/>
    </location>
</feature>
<feature type="compositionally biased region" description="Low complexity" evidence="1">
    <location>
        <begin position="66"/>
        <end position="81"/>
    </location>
</feature>
<feature type="compositionally biased region" description="Basic and acidic residues" evidence="1">
    <location>
        <begin position="124"/>
        <end position="140"/>
    </location>
</feature>
<feature type="compositionally biased region" description="Polar residues" evidence="1">
    <location>
        <begin position="146"/>
        <end position="158"/>
    </location>
</feature>
<feature type="compositionally biased region" description="Polar residues" evidence="1">
    <location>
        <begin position="185"/>
        <end position="197"/>
    </location>
</feature>
<feature type="compositionally biased region" description="Polar residues" evidence="1">
    <location>
        <begin position="288"/>
        <end position="299"/>
    </location>
</feature>
<feature type="mutagenesis site" description="Loss of interaction with TOPLESS, but no effect on the interaction with TIFY10A/JAZ1; when associated with A-11 and A-13." evidence="2">
    <original>L</original>
    <variation>A</variation>
    <location>
        <position position="9"/>
    </location>
</feature>
<feature type="mutagenesis site" description="Loss of interaction with TOPLESS, but no effect on the interaction with TIFY10A/JAZ1; when associated with A-9 and A-13." evidence="2">
    <original>L</original>
    <variation>A</variation>
    <location>
        <position position="11"/>
    </location>
</feature>
<feature type="mutagenesis site" description="Loss of interaction with TOPLESS, but no effect on the interaction with TIFY10A/JAZ1; when associated with A-9 and A-11." evidence="2">
    <original>L</original>
    <variation>A</variation>
    <location>
        <position position="13"/>
    </location>
</feature>
<feature type="sequence conflict" description="In Ref. 3; AAK96863." evidence="8" ref="3">
    <original>D</original>
    <variation>E</variation>
    <location>
        <position position="106"/>
    </location>
</feature>
<gene>
    <name evidence="6" type="primary">AFPH2</name>
    <name evidence="7" type="synonym">NINJA</name>
    <name evidence="9" type="ordered locus">At4g28910</name>
    <name evidence="10" type="ORF">F25O24.30</name>
</gene>
<keyword id="KW-0002">3D-structure</keyword>
<keyword id="KW-1184">Jasmonic acid signaling pathway</keyword>
<keyword id="KW-0539">Nucleus</keyword>
<keyword id="KW-0611">Plant defense</keyword>
<keyword id="KW-1185">Reference proteome</keyword>
<keyword id="KW-0678">Repressor</keyword>
<keyword id="KW-0804">Transcription</keyword>
<keyword id="KW-0805">Transcription regulation</keyword>
<reference key="1">
    <citation type="journal article" date="1999" name="Nature">
        <title>Sequence and analysis of chromosome 4 of the plant Arabidopsis thaliana.</title>
        <authorList>
            <person name="Mayer K.F.X."/>
            <person name="Schueller C."/>
            <person name="Wambutt R."/>
            <person name="Murphy G."/>
            <person name="Volckaert G."/>
            <person name="Pohl T."/>
            <person name="Duesterhoeft A."/>
            <person name="Stiekema W."/>
            <person name="Entian K.-D."/>
            <person name="Terryn N."/>
            <person name="Harris B."/>
            <person name="Ansorge W."/>
            <person name="Brandt P."/>
            <person name="Grivell L.A."/>
            <person name="Rieger M."/>
            <person name="Weichselgartner M."/>
            <person name="de Simone V."/>
            <person name="Obermaier B."/>
            <person name="Mache R."/>
            <person name="Mueller M."/>
            <person name="Kreis M."/>
            <person name="Delseny M."/>
            <person name="Puigdomenech P."/>
            <person name="Watson M."/>
            <person name="Schmidtheini T."/>
            <person name="Reichert B."/>
            <person name="Portetelle D."/>
            <person name="Perez-Alonso M."/>
            <person name="Boutry M."/>
            <person name="Bancroft I."/>
            <person name="Vos P."/>
            <person name="Hoheisel J."/>
            <person name="Zimmermann W."/>
            <person name="Wedler H."/>
            <person name="Ridley P."/>
            <person name="Langham S.-A."/>
            <person name="McCullagh B."/>
            <person name="Bilham L."/>
            <person name="Robben J."/>
            <person name="van der Schueren J."/>
            <person name="Grymonprez B."/>
            <person name="Chuang Y.-J."/>
            <person name="Vandenbussche F."/>
            <person name="Braeken M."/>
            <person name="Weltjens I."/>
            <person name="Voet M."/>
            <person name="Bastiaens I."/>
            <person name="Aert R."/>
            <person name="Defoor E."/>
            <person name="Weitzenegger T."/>
            <person name="Bothe G."/>
            <person name="Ramsperger U."/>
            <person name="Hilbert H."/>
            <person name="Braun M."/>
            <person name="Holzer E."/>
            <person name="Brandt A."/>
            <person name="Peters S."/>
            <person name="van Staveren M."/>
            <person name="Dirkse W."/>
            <person name="Mooijman P."/>
            <person name="Klein Lankhorst R."/>
            <person name="Rose M."/>
            <person name="Hauf J."/>
            <person name="Koetter P."/>
            <person name="Berneiser S."/>
            <person name="Hempel S."/>
            <person name="Feldpausch M."/>
            <person name="Lamberth S."/>
            <person name="Van den Daele H."/>
            <person name="De Keyser A."/>
            <person name="Buysshaert C."/>
            <person name="Gielen J."/>
            <person name="Villarroel R."/>
            <person name="De Clercq R."/>
            <person name="van Montagu M."/>
            <person name="Rogers J."/>
            <person name="Cronin A."/>
            <person name="Quail M.A."/>
            <person name="Bray-Allen S."/>
            <person name="Clark L."/>
            <person name="Doggett J."/>
            <person name="Hall S."/>
            <person name="Kay M."/>
            <person name="Lennard N."/>
            <person name="McLay K."/>
            <person name="Mayes R."/>
            <person name="Pettett A."/>
            <person name="Rajandream M.A."/>
            <person name="Lyne M."/>
            <person name="Benes V."/>
            <person name="Rechmann S."/>
            <person name="Borkova D."/>
            <person name="Bloecker H."/>
            <person name="Scharfe M."/>
            <person name="Grimm M."/>
            <person name="Loehnert T.-H."/>
            <person name="Dose S."/>
            <person name="de Haan M."/>
            <person name="Maarse A.C."/>
            <person name="Schaefer M."/>
            <person name="Mueller-Auer S."/>
            <person name="Gabel C."/>
            <person name="Fuchs M."/>
            <person name="Fartmann B."/>
            <person name="Granderath K."/>
            <person name="Dauner D."/>
            <person name="Herzl A."/>
            <person name="Neumann S."/>
            <person name="Argiriou A."/>
            <person name="Vitale D."/>
            <person name="Liguori R."/>
            <person name="Piravandi E."/>
            <person name="Massenet O."/>
            <person name="Quigley F."/>
            <person name="Clabauld G."/>
            <person name="Muendlein A."/>
            <person name="Felber R."/>
            <person name="Schnabl S."/>
            <person name="Hiller R."/>
            <person name="Schmidt W."/>
            <person name="Lecharny A."/>
            <person name="Aubourg S."/>
            <person name="Chefdor F."/>
            <person name="Cooke R."/>
            <person name="Berger C."/>
            <person name="Monfort A."/>
            <person name="Casacuberta E."/>
            <person name="Gibbons T."/>
            <person name="Weber N."/>
            <person name="Vandenbol M."/>
            <person name="Bargues M."/>
            <person name="Terol J."/>
            <person name="Torres A."/>
            <person name="Perez-Perez A."/>
            <person name="Purnelle B."/>
            <person name="Bent E."/>
            <person name="Johnson S."/>
            <person name="Tacon D."/>
            <person name="Jesse T."/>
            <person name="Heijnen L."/>
            <person name="Schwarz S."/>
            <person name="Scholler P."/>
            <person name="Heber S."/>
            <person name="Francs P."/>
            <person name="Bielke C."/>
            <person name="Frishman D."/>
            <person name="Haase D."/>
            <person name="Lemcke K."/>
            <person name="Mewes H.-W."/>
            <person name="Stocker S."/>
            <person name="Zaccaria P."/>
            <person name="Bevan M."/>
            <person name="Wilson R.K."/>
            <person name="de la Bastide M."/>
            <person name="Habermann K."/>
            <person name="Parnell L."/>
            <person name="Dedhia N."/>
            <person name="Gnoj L."/>
            <person name="Schutz K."/>
            <person name="Huang E."/>
            <person name="Spiegel L."/>
            <person name="Sekhon M."/>
            <person name="Murray J."/>
            <person name="Sheet P."/>
            <person name="Cordes M."/>
            <person name="Abu-Threideh J."/>
            <person name="Stoneking T."/>
            <person name="Kalicki J."/>
            <person name="Graves T."/>
            <person name="Harmon G."/>
            <person name="Edwards J."/>
            <person name="Latreille P."/>
            <person name="Courtney L."/>
            <person name="Cloud J."/>
            <person name="Abbott A."/>
            <person name="Scott K."/>
            <person name="Johnson D."/>
            <person name="Minx P."/>
            <person name="Bentley D."/>
            <person name="Fulton B."/>
            <person name="Miller N."/>
            <person name="Greco T."/>
            <person name="Kemp K."/>
            <person name="Kramer J."/>
            <person name="Fulton L."/>
            <person name="Mardis E."/>
            <person name="Dante M."/>
            <person name="Pepin K."/>
            <person name="Hillier L.W."/>
            <person name="Nelson J."/>
            <person name="Spieth J."/>
            <person name="Ryan E."/>
            <person name="Andrews S."/>
            <person name="Geisel C."/>
            <person name="Layman D."/>
            <person name="Du H."/>
            <person name="Ali J."/>
            <person name="Berghoff A."/>
            <person name="Jones K."/>
            <person name="Drone K."/>
            <person name="Cotton M."/>
            <person name="Joshu C."/>
            <person name="Antonoiu B."/>
            <person name="Zidanic M."/>
            <person name="Strong C."/>
            <person name="Sun H."/>
            <person name="Lamar B."/>
            <person name="Yordan C."/>
            <person name="Ma P."/>
            <person name="Zhong J."/>
            <person name="Preston R."/>
            <person name="Vil D."/>
            <person name="Shekher M."/>
            <person name="Matero A."/>
            <person name="Shah R."/>
            <person name="Swaby I.K."/>
            <person name="O'Shaughnessy A."/>
            <person name="Rodriguez M."/>
            <person name="Hoffman J."/>
            <person name="Till S."/>
            <person name="Granat S."/>
            <person name="Shohdy N."/>
            <person name="Hasegawa A."/>
            <person name="Hameed A."/>
            <person name="Lodhi M."/>
            <person name="Johnson A."/>
            <person name="Chen E."/>
            <person name="Marra M.A."/>
            <person name="Martienssen R."/>
            <person name="McCombie W.R."/>
        </authorList>
    </citation>
    <scope>NUCLEOTIDE SEQUENCE [LARGE SCALE GENOMIC DNA]</scope>
    <source>
        <strain>cv. Columbia</strain>
    </source>
</reference>
<reference key="2">
    <citation type="journal article" date="2017" name="Plant J.">
        <title>Araport11: a complete reannotation of the Arabidopsis thaliana reference genome.</title>
        <authorList>
            <person name="Cheng C.Y."/>
            <person name="Krishnakumar V."/>
            <person name="Chan A.P."/>
            <person name="Thibaud-Nissen F."/>
            <person name="Schobel S."/>
            <person name="Town C.D."/>
        </authorList>
    </citation>
    <scope>GENOME REANNOTATION</scope>
    <source>
        <strain>cv. Columbia</strain>
    </source>
</reference>
<reference key="3">
    <citation type="journal article" date="2003" name="Science">
        <title>Empirical analysis of transcriptional activity in the Arabidopsis genome.</title>
        <authorList>
            <person name="Yamada K."/>
            <person name="Lim J."/>
            <person name="Dale J.M."/>
            <person name="Chen H."/>
            <person name="Shinn P."/>
            <person name="Palm C.J."/>
            <person name="Southwick A.M."/>
            <person name="Wu H.C."/>
            <person name="Kim C.J."/>
            <person name="Nguyen M."/>
            <person name="Pham P.K."/>
            <person name="Cheuk R.F."/>
            <person name="Karlin-Newmann G."/>
            <person name="Liu S.X."/>
            <person name="Lam B."/>
            <person name="Sakano H."/>
            <person name="Wu T."/>
            <person name="Yu G."/>
            <person name="Miranda M."/>
            <person name="Quach H.L."/>
            <person name="Tripp M."/>
            <person name="Chang C.H."/>
            <person name="Lee J.M."/>
            <person name="Toriumi M.J."/>
            <person name="Chan M.M."/>
            <person name="Tang C.C."/>
            <person name="Onodera C.S."/>
            <person name="Deng J.M."/>
            <person name="Akiyama K."/>
            <person name="Ansari Y."/>
            <person name="Arakawa T."/>
            <person name="Banh J."/>
            <person name="Banno F."/>
            <person name="Bowser L."/>
            <person name="Brooks S.Y."/>
            <person name="Carninci P."/>
            <person name="Chao Q."/>
            <person name="Choy N."/>
            <person name="Enju A."/>
            <person name="Goldsmith A.D."/>
            <person name="Gurjal M."/>
            <person name="Hansen N.F."/>
            <person name="Hayashizaki Y."/>
            <person name="Johnson-Hopson C."/>
            <person name="Hsuan V.W."/>
            <person name="Iida K."/>
            <person name="Karnes M."/>
            <person name="Khan S."/>
            <person name="Koesema E."/>
            <person name="Ishida J."/>
            <person name="Jiang P.X."/>
            <person name="Jones T."/>
            <person name="Kawai J."/>
            <person name="Kamiya A."/>
            <person name="Meyers C."/>
            <person name="Nakajima M."/>
            <person name="Narusaka M."/>
            <person name="Seki M."/>
            <person name="Sakurai T."/>
            <person name="Satou M."/>
            <person name="Tamse R."/>
            <person name="Vaysberg M."/>
            <person name="Wallender E.K."/>
            <person name="Wong C."/>
            <person name="Yamamura Y."/>
            <person name="Yuan S."/>
            <person name="Shinozaki K."/>
            <person name="Davis R.W."/>
            <person name="Theologis A."/>
            <person name="Ecker J.R."/>
        </authorList>
    </citation>
    <scope>NUCLEOTIDE SEQUENCE [LARGE SCALE MRNA]</scope>
    <source>
        <strain>cv. Columbia</strain>
    </source>
</reference>
<reference key="4">
    <citation type="journal article" date="2009" name="DNA Res.">
        <title>Analysis of multiple occurrences of alternative splicing events in Arabidopsis thaliana using novel sequenced full-length cDNAs.</title>
        <authorList>
            <person name="Iida K."/>
            <person name="Fukami-Kobayashi K."/>
            <person name="Toyoda A."/>
            <person name="Sakaki Y."/>
            <person name="Kobayashi M."/>
            <person name="Seki M."/>
            <person name="Shinozaki K."/>
        </authorList>
    </citation>
    <scope>NUCLEOTIDE SEQUENCE [LARGE SCALE MRNA]</scope>
    <source>
        <strain>cv. Columbia</strain>
    </source>
</reference>
<reference key="5">
    <citation type="submission" date="2002-03" db="EMBL/GenBank/DDBJ databases">
        <title>Full-length cDNA from Arabidopsis thaliana.</title>
        <authorList>
            <person name="Brover V.V."/>
            <person name="Troukhan M.E."/>
            <person name="Alexandrov N.A."/>
            <person name="Lu Y.-P."/>
            <person name="Flavell R.B."/>
            <person name="Feldmann K.A."/>
        </authorList>
    </citation>
    <scope>NUCLEOTIDE SEQUENCE [LARGE SCALE MRNA]</scope>
</reference>
<reference key="6">
    <citation type="journal article" date="2008" name="Plant Mol. Biol.">
        <title>A small plant-specific protein family of ABI five binding proteins (AFPs) regulates stress response in germinating Arabidopsis seeds and seedlings.</title>
        <authorList>
            <person name="Garcia M.E."/>
            <person name="Lynch T.J."/>
            <person name="Peeters J."/>
            <person name="Snowden C."/>
            <person name="Finkelstein R.R."/>
        </authorList>
    </citation>
    <scope>GENE FAMILY</scope>
    <scope>NOMENCLATURE</scope>
</reference>
<reference key="7">
    <citation type="journal article" date="2010" name="Nature">
        <title>NINJA connects the co-repressor TOPLESS to jasmonate signalling.</title>
        <authorList>
            <person name="Pauwels L."/>
            <person name="Barbero G.F."/>
            <person name="Geerinck J."/>
            <person name="Tilleman S."/>
            <person name="Grunewald W."/>
            <person name="Perez A.C."/>
            <person name="Chico J.M."/>
            <person name="Bossche R.V."/>
            <person name="Sewell J."/>
            <person name="Gil E."/>
            <person name="Garcia-Casado G."/>
            <person name="Witters E."/>
            <person name="Inze D."/>
            <person name="Long J.A."/>
            <person name="De Jaeger G."/>
            <person name="Solano R."/>
            <person name="Goossens A."/>
        </authorList>
    </citation>
    <scope>FUNCTION</scope>
    <scope>INTERACTION WITH TIFY10A/JAZ1; TIFY10B/JAZ2; TIFY6B/JAZ3; TIFY6A/JAZ4; TIFY11A/JAZ5; TIFY11B/JAZ6; TIFY7/JAZ9; TIFY9/JAZ10; TIFY3A/JAZ11; TIFY3B/JAZ12; TIFY4A/PPD1; TIFY4B/PPD2; TIFY8 AND TOPLESS</scope>
    <scope>INDUCTION BY JASMONATE</scope>
    <scope>SUBCELLULAR LOCATION</scope>
    <scope>MUTAGENESIS OF LEU-9; LEU-11 AND LEU-13</scope>
</reference>
<reference key="8">
    <citation type="journal article" date="2013" name="Proc. Natl. Acad. Sci. U.S.A.">
        <title>Role of NINJA in root jasmonate signaling.</title>
        <authorList>
            <person name="Acosta I.F."/>
            <person name="Gasperini D."/>
            <person name="Chetelat A."/>
            <person name="Stolz S."/>
            <person name="Santuari L."/>
            <person name="Farmer E.E."/>
        </authorList>
    </citation>
    <scope>FUNCTION</scope>
</reference>
<reference key="9">
    <citation type="journal article" date="2014" name="PLoS ONE">
        <title>The non-JAZ TIFY protein TIFY8 from Arabidopsis thaliana is a transcriptional repressor.</title>
        <authorList>
            <person name="Cuellar Perez A."/>
            <person name="Nagels Durand A."/>
            <person name="Vanden Bossche R."/>
            <person name="De Clercq R."/>
            <person name="Persiau G."/>
            <person name="Van Wees S.C."/>
            <person name="Pieterse C.M."/>
            <person name="Gevaert K."/>
            <person name="De Jaeger G."/>
            <person name="Goossens A."/>
            <person name="Pauwels L."/>
        </authorList>
    </citation>
    <scope>FUNCTION</scope>
    <scope>INTERACTION WITH TOPLESS AND TIFY8</scope>
</reference>
<reference key="10">
    <citation type="journal article" date="2016" name="Plant Cell Rep.">
        <title>Topoisomerase II-associated protein PAT1H1 is involved in the root stem cell niche maintenance in Arabidopsis thaliana.</title>
        <authorList>
            <person name="Yu Q."/>
            <person name="Liu J."/>
            <person name="Zheng H."/>
            <person name="Jia Y."/>
            <person name="Tian H."/>
            <person name="Ding Z."/>
        </authorList>
    </citation>
    <scope>INTERACTION WITH PAT1H1</scope>
</reference>
<reference key="11">
    <citation type="journal article" date="2015" name="Sci. Adv.">
        <title>Structural basis for recognition of diverse transcriptional repressors by the TOPLESS family of corepressors.</title>
        <authorList>
            <person name="Ke J."/>
            <person name="Ma H."/>
            <person name="Gu X."/>
            <person name="Thelen A."/>
            <person name="Brunzelle J.S."/>
            <person name="Li J."/>
            <person name="Xu H.E."/>
            <person name="Melcher K."/>
        </authorList>
    </citation>
    <scope>X-RAY CRYSTALLOGRAPHY (3.10 ANGSTROMS) OF 4-14 IN COMPLEX WITH RICE TPR1</scope>
</reference>